<protein>
    <recommendedName>
        <fullName>Temporin-1Lc</fullName>
    </recommendedName>
</protein>
<feature type="peptide" id="PRO_0000043577" description="Temporin-1Lc">
    <location>
        <begin position="1"/>
        <end position="14"/>
    </location>
</feature>
<feature type="modified residue" description="Leucine amide" evidence="1">
    <location>
        <position position="14"/>
    </location>
</feature>
<evidence type="ECO:0000269" key="1">
    <source>
    </source>
</evidence>
<evidence type="ECO:0000305" key="2"/>
<accession>P82832</accession>
<proteinExistence type="evidence at protein level"/>
<keyword id="KW-0027">Amidation</keyword>
<keyword id="KW-0878">Amphibian defense peptide</keyword>
<keyword id="KW-0044">Antibiotic</keyword>
<keyword id="KW-0929">Antimicrobial</keyword>
<keyword id="KW-0903">Direct protein sequencing</keyword>
<keyword id="KW-0295">Fungicide</keyword>
<keyword id="KW-0964">Secreted</keyword>
<organism>
    <name type="scientific">Rana luteiventris</name>
    <name type="common">Columbia spotted frog</name>
    <name type="synonym">Rana pretiosa luteiventris</name>
    <dbReference type="NCBI Taxonomy" id="58176"/>
    <lineage>
        <taxon>Eukaryota</taxon>
        <taxon>Metazoa</taxon>
        <taxon>Chordata</taxon>
        <taxon>Craniata</taxon>
        <taxon>Vertebrata</taxon>
        <taxon>Euteleostomi</taxon>
        <taxon>Amphibia</taxon>
        <taxon>Batrachia</taxon>
        <taxon>Anura</taxon>
        <taxon>Neobatrachia</taxon>
        <taxon>Ranoidea</taxon>
        <taxon>Ranidae</taxon>
        <taxon>Rana</taxon>
        <taxon>Rana</taxon>
    </lineage>
</organism>
<reference key="1">
    <citation type="journal article" date="2000" name="Eur. J. Biochem.">
        <title>Peptides with antimicrobial activity from four different families isolated from the skins of the North American frogs Rana luteiventris, Rana berlandieri and Rana pipiens.</title>
        <authorList>
            <person name="Goraya J."/>
            <person name="Wang Y."/>
            <person name="Li Z."/>
            <person name="O'Flaherty M."/>
            <person name="Knoop F.C."/>
            <person name="Platz J.E."/>
            <person name="Conlon J.M."/>
        </authorList>
    </citation>
    <scope>PROTEIN SEQUENCE</scope>
    <scope>AMIDATION AT LEU-14</scope>
    <scope>FUNCTION</scope>
    <scope>MASS SPECTROMETRY</scope>
    <source>
        <tissue>Skin secretion</tissue>
    </source>
</reference>
<comment type="function">
    <text evidence="1">Antibacterial activity against Gram-positive bacterium S.aureus. Weak activity against Gram-negative bacterium E.coli and C.albicans.</text>
</comment>
<comment type="subcellular location">
    <subcellularLocation>
        <location>Secreted</location>
    </subcellularLocation>
</comment>
<comment type="tissue specificity">
    <text>Expressed by the skin glands.</text>
</comment>
<comment type="mass spectrometry" mass="1603.1" method="Electrospray" evidence="1"/>
<comment type="similarity">
    <text evidence="2">Belongs to the frog skin active peptide (FSAP) family. Temporin subfamily.</text>
</comment>
<dbReference type="GO" id="GO:0005576">
    <property type="term" value="C:extracellular region"/>
    <property type="evidence" value="ECO:0007669"/>
    <property type="project" value="UniProtKB-SubCell"/>
</dbReference>
<dbReference type="GO" id="GO:0042742">
    <property type="term" value="P:defense response to bacterium"/>
    <property type="evidence" value="ECO:0007669"/>
    <property type="project" value="UniProtKB-KW"/>
</dbReference>
<dbReference type="GO" id="GO:0050832">
    <property type="term" value="P:defense response to fungus"/>
    <property type="evidence" value="ECO:0007669"/>
    <property type="project" value="UniProtKB-KW"/>
</dbReference>
<dbReference type="GO" id="GO:0031640">
    <property type="term" value="P:killing of cells of another organism"/>
    <property type="evidence" value="ECO:0007669"/>
    <property type="project" value="UniProtKB-KW"/>
</dbReference>
<sequence length="14" mass="1604">FLPILINLIHKGLL</sequence>
<name>TP1C_RANLU</name>